<organism>
    <name type="scientific">Escherichia coli (strain SMS-3-5 / SECEC)</name>
    <dbReference type="NCBI Taxonomy" id="439855"/>
    <lineage>
        <taxon>Bacteria</taxon>
        <taxon>Pseudomonadati</taxon>
        <taxon>Pseudomonadota</taxon>
        <taxon>Gammaproteobacteria</taxon>
        <taxon>Enterobacterales</taxon>
        <taxon>Enterobacteriaceae</taxon>
        <taxon>Escherichia</taxon>
    </lineage>
</organism>
<sequence>MMENYKHTTVLLDEAVNGLNIRPDGIYIDGTFGRGGHSRLILSQLGEEGRLLAIDRDPQAIAVAKTIDDPRFSIIHGPFSALGEYVAERDLIGKIDGILLDLGVSSPQLDDAERGFSFMRDGPLDMRMDPTRGQSAAEWLQTAEEADIAWVLKTYGEERFAKRIARAIVERNREQPMTRTKELAEVVAAATPVKDKFKHPATRTFQAVRIWVNSELEEIEQALKSSLNVLAPGGRLSIISFHSLEDRIVKRFMRENSRGPQVPAGLPMTEEQLKKLGGRQLRALGKLMPGEEEVAENPRARSSVLRIAERTNA</sequence>
<dbReference type="EC" id="2.1.1.199" evidence="1"/>
<dbReference type="EMBL" id="CP000970">
    <property type="protein sequence ID" value="ACB15607.1"/>
    <property type="molecule type" value="Genomic_DNA"/>
</dbReference>
<dbReference type="RefSeq" id="WP_000970479.1">
    <property type="nucleotide sequence ID" value="NC_010498.1"/>
</dbReference>
<dbReference type="SMR" id="B1LG19"/>
<dbReference type="GeneID" id="86862592"/>
<dbReference type="KEGG" id="ecm:EcSMS35_0087"/>
<dbReference type="HOGENOM" id="CLU_038422_2_0_6"/>
<dbReference type="Proteomes" id="UP000007011">
    <property type="component" value="Chromosome"/>
</dbReference>
<dbReference type="GO" id="GO:0005737">
    <property type="term" value="C:cytoplasm"/>
    <property type="evidence" value="ECO:0007669"/>
    <property type="project" value="UniProtKB-SubCell"/>
</dbReference>
<dbReference type="GO" id="GO:0071424">
    <property type="term" value="F:rRNA (cytosine-N4-)-methyltransferase activity"/>
    <property type="evidence" value="ECO:0007669"/>
    <property type="project" value="UniProtKB-UniRule"/>
</dbReference>
<dbReference type="GO" id="GO:0070475">
    <property type="term" value="P:rRNA base methylation"/>
    <property type="evidence" value="ECO:0007669"/>
    <property type="project" value="UniProtKB-UniRule"/>
</dbReference>
<dbReference type="FunFam" id="1.10.150.170:FF:000001">
    <property type="entry name" value="Ribosomal RNA small subunit methyltransferase H"/>
    <property type="match status" value="1"/>
</dbReference>
<dbReference type="Gene3D" id="1.10.150.170">
    <property type="entry name" value="Putative methyltransferase TM0872, insert domain"/>
    <property type="match status" value="1"/>
</dbReference>
<dbReference type="Gene3D" id="3.40.50.150">
    <property type="entry name" value="Vaccinia Virus protein VP39"/>
    <property type="match status" value="1"/>
</dbReference>
<dbReference type="HAMAP" id="MF_01007">
    <property type="entry name" value="16SrRNA_methyltr_H"/>
    <property type="match status" value="1"/>
</dbReference>
<dbReference type="InterPro" id="IPR002903">
    <property type="entry name" value="RsmH"/>
</dbReference>
<dbReference type="InterPro" id="IPR023397">
    <property type="entry name" value="SAM-dep_MeTrfase_MraW_recog"/>
</dbReference>
<dbReference type="InterPro" id="IPR029063">
    <property type="entry name" value="SAM-dependent_MTases_sf"/>
</dbReference>
<dbReference type="NCBIfam" id="TIGR00006">
    <property type="entry name" value="16S rRNA (cytosine(1402)-N(4))-methyltransferase RsmH"/>
    <property type="match status" value="1"/>
</dbReference>
<dbReference type="PANTHER" id="PTHR11265:SF0">
    <property type="entry name" value="12S RRNA N4-METHYLCYTIDINE METHYLTRANSFERASE"/>
    <property type="match status" value="1"/>
</dbReference>
<dbReference type="PANTHER" id="PTHR11265">
    <property type="entry name" value="S-ADENOSYL-METHYLTRANSFERASE MRAW"/>
    <property type="match status" value="1"/>
</dbReference>
<dbReference type="Pfam" id="PF01795">
    <property type="entry name" value="Methyltransf_5"/>
    <property type="match status" value="1"/>
</dbReference>
<dbReference type="PIRSF" id="PIRSF004486">
    <property type="entry name" value="MraW"/>
    <property type="match status" value="1"/>
</dbReference>
<dbReference type="SUPFAM" id="SSF81799">
    <property type="entry name" value="Putative methyltransferase TM0872, insert domain"/>
    <property type="match status" value="1"/>
</dbReference>
<dbReference type="SUPFAM" id="SSF53335">
    <property type="entry name" value="S-adenosyl-L-methionine-dependent methyltransferases"/>
    <property type="match status" value="1"/>
</dbReference>
<proteinExistence type="inferred from homology"/>
<name>RSMH_ECOSM</name>
<keyword id="KW-0963">Cytoplasm</keyword>
<keyword id="KW-0489">Methyltransferase</keyword>
<keyword id="KW-0698">rRNA processing</keyword>
<keyword id="KW-0949">S-adenosyl-L-methionine</keyword>
<keyword id="KW-0808">Transferase</keyword>
<protein>
    <recommendedName>
        <fullName evidence="1">Ribosomal RNA small subunit methyltransferase H</fullName>
        <ecNumber evidence="1">2.1.1.199</ecNumber>
    </recommendedName>
    <alternativeName>
        <fullName evidence="1">16S rRNA m(4)C1402 methyltransferase</fullName>
    </alternativeName>
    <alternativeName>
        <fullName evidence="1">rRNA (cytosine-N(4)-)-methyltransferase RsmH</fullName>
    </alternativeName>
</protein>
<evidence type="ECO:0000255" key="1">
    <source>
        <dbReference type="HAMAP-Rule" id="MF_01007"/>
    </source>
</evidence>
<feature type="chain" id="PRO_0000386874" description="Ribosomal RNA small subunit methyltransferase H">
    <location>
        <begin position="1"/>
        <end position="313"/>
    </location>
</feature>
<feature type="binding site" evidence="1">
    <location>
        <begin position="35"/>
        <end position="37"/>
    </location>
    <ligand>
        <name>S-adenosyl-L-methionine</name>
        <dbReference type="ChEBI" id="CHEBI:59789"/>
    </ligand>
</feature>
<feature type="binding site" evidence="1">
    <location>
        <position position="55"/>
    </location>
    <ligand>
        <name>S-adenosyl-L-methionine</name>
        <dbReference type="ChEBI" id="CHEBI:59789"/>
    </ligand>
</feature>
<feature type="binding site" evidence="1">
    <location>
        <position position="79"/>
    </location>
    <ligand>
        <name>S-adenosyl-L-methionine</name>
        <dbReference type="ChEBI" id="CHEBI:59789"/>
    </ligand>
</feature>
<feature type="binding site" evidence="1">
    <location>
        <position position="101"/>
    </location>
    <ligand>
        <name>S-adenosyl-L-methionine</name>
        <dbReference type="ChEBI" id="CHEBI:59789"/>
    </ligand>
</feature>
<feature type="binding site" evidence="1">
    <location>
        <position position="108"/>
    </location>
    <ligand>
        <name>S-adenosyl-L-methionine</name>
        <dbReference type="ChEBI" id="CHEBI:59789"/>
    </ligand>
</feature>
<gene>
    <name evidence="1" type="primary">rsmH</name>
    <name type="synonym">mraW</name>
    <name type="ordered locus">EcSMS35_0087</name>
</gene>
<accession>B1LG19</accession>
<comment type="function">
    <text evidence="1">Specifically methylates the N4 position of cytidine in position 1402 (C1402) of 16S rRNA.</text>
</comment>
<comment type="catalytic activity">
    <reaction evidence="1">
        <text>cytidine(1402) in 16S rRNA + S-adenosyl-L-methionine = N(4)-methylcytidine(1402) in 16S rRNA + S-adenosyl-L-homocysteine + H(+)</text>
        <dbReference type="Rhea" id="RHEA:42928"/>
        <dbReference type="Rhea" id="RHEA-COMP:10286"/>
        <dbReference type="Rhea" id="RHEA-COMP:10287"/>
        <dbReference type="ChEBI" id="CHEBI:15378"/>
        <dbReference type="ChEBI" id="CHEBI:57856"/>
        <dbReference type="ChEBI" id="CHEBI:59789"/>
        <dbReference type="ChEBI" id="CHEBI:74506"/>
        <dbReference type="ChEBI" id="CHEBI:82748"/>
        <dbReference type="EC" id="2.1.1.199"/>
    </reaction>
</comment>
<comment type="subcellular location">
    <subcellularLocation>
        <location evidence="1">Cytoplasm</location>
    </subcellularLocation>
</comment>
<comment type="similarity">
    <text evidence="1">Belongs to the methyltransferase superfamily. RsmH family.</text>
</comment>
<reference key="1">
    <citation type="journal article" date="2008" name="J. Bacteriol.">
        <title>Insights into the environmental resistance gene pool from the genome sequence of the multidrug-resistant environmental isolate Escherichia coli SMS-3-5.</title>
        <authorList>
            <person name="Fricke W.F."/>
            <person name="Wright M.S."/>
            <person name="Lindell A.H."/>
            <person name="Harkins D.M."/>
            <person name="Baker-Austin C."/>
            <person name="Ravel J."/>
            <person name="Stepanauskas R."/>
        </authorList>
    </citation>
    <scope>NUCLEOTIDE SEQUENCE [LARGE SCALE GENOMIC DNA]</scope>
    <source>
        <strain>SMS-3-5 / SECEC</strain>
    </source>
</reference>